<comment type="function">
    <text evidence="1">Catalyzes the reversible transfer of the terminal phosphate group between ATP and AMP. Plays an important role in cellular energy homeostasis and in adenine nucleotide metabolism.</text>
</comment>
<comment type="catalytic activity">
    <reaction evidence="1">
        <text>AMP + ATP = 2 ADP</text>
        <dbReference type="Rhea" id="RHEA:12973"/>
        <dbReference type="ChEBI" id="CHEBI:30616"/>
        <dbReference type="ChEBI" id="CHEBI:456215"/>
        <dbReference type="ChEBI" id="CHEBI:456216"/>
        <dbReference type="EC" id="2.7.4.3"/>
    </reaction>
</comment>
<comment type="pathway">
    <text evidence="1">Purine metabolism; AMP biosynthesis via salvage pathway; AMP from ADP: step 1/1.</text>
</comment>
<comment type="subunit">
    <text evidence="1">Monomer.</text>
</comment>
<comment type="subcellular location">
    <subcellularLocation>
        <location evidence="1">Cytoplasm</location>
    </subcellularLocation>
</comment>
<comment type="domain">
    <text evidence="1">Consists of three domains, a large central CORE domain and two small peripheral domains, NMPbind and LID, which undergo movements during catalysis. The LID domain closes over the site of phosphoryl transfer upon ATP binding. Assembling and dissambling the active center during each catalytic cycle provides an effective means to prevent ATP hydrolysis.</text>
</comment>
<comment type="similarity">
    <text evidence="1">Belongs to the adenylate kinase family.</text>
</comment>
<proteinExistence type="inferred from homology"/>
<evidence type="ECO:0000255" key="1">
    <source>
        <dbReference type="HAMAP-Rule" id="MF_00235"/>
    </source>
</evidence>
<gene>
    <name evidence="1" type="primary">adk</name>
    <name type="ordered locus">TW226</name>
</gene>
<accession>Q83I60</accession>
<dbReference type="EC" id="2.7.4.3" evidence="1"/>
<dbReference type="EMBL" id="BX251410">
    <property type="protein sequence ID" value="CAD66903.1"/>
    <property type="molecule type" value="Genomic_DNA"/>
</dbReference>
<dbReference type="SMR" id="Q83I60"/>
<dbReference type="KEGG" id="tws:TW226"/>
<dbReference type="HOGENOM" id="CLU_032354_4_1_11"/>
<dbReference type="UniPathway" id="UPA00588">
    <property type="reaction ID" value="UER00649"/>
</dbReference>
<dbReference type="GO" id="GO:0005737">
    <property type="term" value="C:cytoplasm"/>
    <property type="evidence" value="ECO:0007669"/>
    <property type="project" value="UniProtKB-SubCell"/>
</dbReference>
<dbReference type="GO" id="GO:0004017">
    <property type="term" value="F:adenylate kinase activity"/>
    <property type="evidence" value="ECO:0007669"/>
    <property type="project" value="UniProtKB-UniRule"/>
</dbReference>
<dbReference type="GO" id="GO:0005524">
    <property type="term" value="F:ATP binding"/>
    <property type="evidence" value="ECO:0007669"/>
    <property type="project" value="UniProtKB-UniRule"/>
</dbReference>
<dbReference type="GO" id="GO:0044209">
    <property type="term" value="P:AMP salvage"/>
    <property type="evidence" value="ECO:0007669"/>
    <property type="project" value="UniProtKB-UniRule"/>
</dbReference>
<dbReference type="CDD" id="cd01428">
    <property type="entry name" value="ADK"/>
    <property type="match status" value="1"/>
</dbReference>
<dbReference type="Gene3D" id="3.40.50.300">
    <property type="entry name" value="P-loop containing nucleotide triphosphate hydrolases"/>
    <property type="match status" value="1"/>
</dbReference>
<dbReference type="HAMAP" id="MF_00235">
    <property type="entry name" value="Adenylate_kinase_Adk"/>
    <property type="match status" value="1"/>
</dbReference>
<dbReference type="InterPro" id="IPR000850">
    <property type="entry name" value="Adenylat/UMP-CMP_kin"/>
</dbReference>
<dbReference type="InterPro" id="IPR033690">
    <property type="entry name" value="Adenylat_kinase_CS"/>
</dbReference>
<dbReference type="InterPro" id="IPR027417">
    <property type="entry name" value="P-loop_NTPase"/>
</dbReference>
<dbReference type="PANTHER" id="PTHR23359">
    <property type="entry name" value="NUCLEOTIDE KINASE"/>
    <property type="match status" value="1"/>
</dbReference>
<dbReference type="Pfam" id="PF00406">
    <property type="entry name" value="ADK"/>
    <property type="match status" value="1"/>
</dbReference>
<dbReference type="PRINTS" id="PR00094">
    <property type="entry name" value="ADENYLTKNASE"/>
</dbReference>
<dbReference type="SUPFAM" id="SSF52540">
    <property type="entry name" value="P-loop containing nucleoside triphosphate hydrolases"/>
    <property type="match status" value="1"/>
</dbReference>
<dbReference type="PROSITE" id="PS00113">
    <property type="entry name" value="ADENYLATE_KINASE"/>
    <property type="match status" value="1"/>
</dbReference>
<protein>
    <recommendedName>
        <fullName evidence="1">Adenylate kinase</fullName>
        <shortName evidence="1">AK</shortName>
        <ecNumber evidence="1">2.7.4.3</ecNumber>
    </recommendedName>
    <alternativeName>
        <fullName evidence="1">ATP-AMP transphosphorylase</fullName>
    </alternativeName>
    <alternativeName>
        <fullName evidence="1">ATP:AMP phosphotransferase</fullName>
    </alternativeName>
    <alternativeName>
        <fullName evidence="1">Adenylate monophosphate kinase</fullName>
    </alternativeName>
</protein>
<organism>
    <name type="scientific">Tropheryma whipplei (strain TW08/27)</name>
    <name type="common">Whipple's bacillus</name>
    <dbReference type="NCBI Taxonomy" id="218496"/>
    <lineage>
        <taxon>Bacteria</taxon>
        <taxon>Bacillati</taxon>
        <taxon>Actinomycetota</taxon>
        <taxon>Actinomycetes</taxon>
        <taxon>Micrococcales</taxon>
        <taxon>Tropherymataceae</taxon>
        <taxon>Tropheryma</taxon>
    </lineage>
</organism>
<reference key="1">
    <citation type="journal article" date="2003" name="Lancet">
        <title>Sequencing and analysis of the genome of the Whipple's disease bacterium Tropheryma whipplei.</title>
        <authorList>
            <person name="Bentley S.D."/>
            <person name="Maiwald M."/>
            <person name="Murphy L.D."/>
            <person name="Pallen M.J."/>
            <person name="Yeats C.A."/>
            <person name="Dover L.G."/>
            <person name="Norbertczak H.T."/>
            <person name="Besra G.S."/>
            <person name="Quail M.A."/>
            <person name="Harris D.E."/>
            <person name="von Herbay A."/>
            <person name="Goble A."/>
            <person name="Rutter S."/>
            <person name="Squares R."/>
            <person name="Squares S."/>
            <person name="Barrell B.G."/>
            <person name="Parkhill J."/>
            <person name="Relman D.A."/>
        </authorList>
    </citation>
    <scope>NUCLEOTIDE SEQUENCE [LARGE SCALE GENOMIC DNA]</scope>
    <source>
        <strain>TW08/27</strain>
    </source>
</reference>
<keyword id="KW-0067">ATP-binding</keyword>
<keyword id="KW-0963">Cytoplasm</keyword>
<keyword id="KW-0418">Kinase</keyword>
<keyword id="KW-0545">Nucleotide biosynthesis</keyword>
<keyword id="KW-0547">Nucleotide-binding</keyword>
<keyword id="KW-0808">Transferase</keyword>
<sequence length="186" mass="20692">MRAIMVGPPGSGKGTQCGLIQSRLGISVIATGDVFRERMKTDMALRDIVSSGGYVSDSTTNRIVEDCLDKEDVSSGFVLDGYPRTLQQLDFLEGFLKRRALTLDAVFSLEVATDLLIERLRARSKESGRTDDRDSVIARRLEIYTEMTLPIIDACEEKGLLHRIDASKGIEEVFQSIKDVFDRVTI</sequence>
<name>KAD_TROW8</name>
<feature type="chain" id="PRO_0000158879" description="Adenylate kinase">
    <location>
        <begin position="1"/>
        <end position="186"/>
    </location>
</feature>
<feature type="region of interest" description="NMP" evidence="1">
    <location>
        <begin position="30"/>
        <end position="55"/>
    </location>
</feature>
<feature type="region of interest" description="LID" evidence="1">
    <location>
        <begin position="122"/>
        <end position="132"/>
    </location>
</feature>
<feature type="binding site" evidence="1">
    <location>
        <begin position="10"/>
        <end position="15"/>
    </location>
    <ligand>
        <name>ATP</name>
        <dbReference type="ChEBI" id="CHEBI:30616"/>
    </ligand>
</feature>
<feature type="binding site" evidence="1">
    <location>
        <position position="31"/>
    </location>
    <ligand>
        <name>AMP</name>
        <dbReference type="ChEBI" id="CHEBI:456215"/>
    </ligand>
</feature>
<feature type="binding site" evidence="1">
    <location>
        <position position="36"/>
    </location>
    <ligand>
        <name>AMP</name>
        <dbReference type="ChEBI" id="CHEBI:456215"/>
    </ligand>
</feature>
<feature type="binding site" evidence="1">
    <location>
        <begin position="53"/>
        <end position="55"/>
    </location>
    <ligand>
        <name>AMP</name>
        <dbReference type="ChEBI" id="CHEBI:456215"/>
    </ligand>
</feature>
<feature type="binding site" evidence="1">
    <location>
        <begin position="81"/>
        <end position="84"/>
    </location>
    <ligand>
        <name>AMP</name>
        <dbReference type="ChEBI" id="CHEBI:456215"/>
    </ligand>
</feature>
<feature type="binding site" evidence="1">
    <location>
        <position position="88"/>
    </location>
    <ligand>
        <name>AMP</name>
        <dbReference type="ChEBI" id="CHEBI:456215"/>
    </ligand>
</feature>
<feature type="binding site" evidence="1">
    <location>
        <position position="123"/>
    </location>
    <ligand>
        <name>ATP</name>
        <dbReference type="ChEBI" id="CHEBI:30616"/>
    </ligand>
</feature>
<feature type="binding site" evidence="1">
    <location>
        <position position="129"/>
    </location>
    <ligand>
        <name>AMP</name>
        <dbReference type="ChEBI" id="CHEBI:456215"/>
    </ligand>
</feature>
<feature type="binding site" evidence="1">
    <location>
        <position position="140"/>
    </location>
    <ligand>
        <name>AMP</name>
        <dbReference type="ChEBI" id="CHEBI:456215"/>
    </ligand>
</feature>
<feature type="binding site" evidence="1">
    <location>
        <position position="168"/>
    </location>
    <ligand>
        <name>ATP</name>
        <dbReference type="ChEBI" id="CHEBI:30616"/>
    </ligand>
</feature>